<dbReference type="EC" id="3.5.1.88" evidence="1"/>
<dbReference type="EMBL" id="CP001396">
    <property type="protein sequence ID" value="ACR63985.1"/>
    <property type="molecule type" value="Genomic_DNA"/>
</dbReference>
<dbReference type="RefSeq" id="WP_000114984.1">
    <property type="nucleotide sequence ID" value="NC_012759.1"/>
</dbReference>
<dbReference type="SMR" id="C4ZUE1"/>
<dbReference type="GeneID" id="89518132"/>
<dbReference type="KEGG" id="ebw:BWG_2977"/>
<dbReference type="HOGENOM" id="CLU_061901_2_1_6"/>
<dbReference type="GO" id="GO:0046872">
    <property type="term" value="F:metal ion binding"/>
    <property type="evidence" value="ECO:0007669"/>
    <property type="project" value="UniProtKB-KW"/>
</dbReference>
<dbReference type="GO" id="GO:0042586">
    <property type="term" value="F:peptide deformylase activity"/>
    <property type="evidence" value="ECO:0007669"/>
    <property type="project" value="UniProtKB-UniRule"/>
</dbReference>
<dbReference type="GO" id="GO:0043686">
    <property type="term" value="P:co-translational protein modification"/>
    <property type="evidence" value="ECO:0007669"/>
    <property type="project" value="TreeGrafter"/>
</dbReference>
<dbReference type="GO" id="GO:0006412">
    <property type="term" value="P:translation"/>
    <property type="evidence" value="ECO:0007669"/>
    <property type="project" value="UniProtKB-UniRule"/>
</dbReference>
<dbReference type="CDD" id="cd00487">
    <property type="entry name" value="Pep_deformylase"/>
    <property type="match status" value="1"/>
</dbReference>
<dbReference type="FunFam" id="3.90.45.10:FF:000001">
    <property type="entry name" value="Peptide deformylase"/>
    <property type="match status" value="1"/>
</dbReference>
<dbReference type="Gene3D" id="3.90.45.10">
    <property type="entry name" value="Peptide deformylase"/>
    <property type="match status" value="1"/>
</dbReference>
<dbReference type="HAMAP" id="MF_00163">
    <property type="entry name" value="Pep_deformylase"/>
    <property type="match status" value="1"/>
</dbReference>
<dbReference type="InterPro" id="IPR023635">
    <property type="entry name" value="Peptide_deformylase"/>
</dbReference>
<dbReference type="InterPro" id="IPR036821">
    <property type="entry name" value="Peptide_deformylase_sf"/>
</dbReference>
<dbReference type="NCBIfam" id="TIGR00079">
    <property type="entry name" value="pept_deformyl"/>
    <property type="match status" value="1"/>
</dbReference>
<dbReference type="NCBIfam" id="NF001159">
    <property type="entry name" value="PRK00150.1-3"/>
    <property type="match status" value="1"/>
</dbReference>
<dbReference type="PANTHER" id="PTHR10458">
    <property type="entry name" value="PEPTIDE DEFORMYLASE"/>
    <property type="match status" value="1"/>
</dbReference>
<dbReference type="PANTHER" id="PTHR10458:SF21">
    <property type="entry name" value="PEPTIDE DEFORMYLASE"/>
    <property type="match status" value="1"/>
</dbReference>
<dbReference type="Pfam" id="PF01327">
    <property type="entry name" value="Pep_deformylase"/>
    <property type="match status" value="1"/>
</dbReference>
<dbReference type="PIRSF" id="PIRSF004749">
    <property type="entry name" value="Pep_def"/>
    <property type="match status" value="1"/>
</dbReference>
<dbReference type="PRINTS" id="PR01576">
    <property type="entry name" value="PDEFORMYLASE"/>
</dbReference>
<dbReference type="SUPFAM" id="SSF56420">
    <property type="entry name" value="Peptide deformylase"/>
    <property type="match status" value="1"/>
</dbReference>
<gene>
    <name evidence="1" type="primary">def</name>
    <name type="ordered locus">BWG_2977</name>
</gene>
<protein>
    <recommendedName>
        <fullName evidence="1">Peptide deformylase</fullName>
        <shortName evidence="1">PDF</shortName>
        <ecNumber evidence="1">3.5.1.88</ecNumber>
    </recommendedName>
    <alternativeName>
        <fullName evidence="1">Polypeptide deformylase</fullName>
    </alternativeName>
</protein>
<feature type="chain" id="PRO_1000203601" description="Peptide deformylase">
    <location>
        <begin position="1"/>
        <end position="169"/>
    </location>
</feature>
<feature type="active site" evidence="1">
    <location>
        <position position="134"/>
    </location>
</feature>
<feature type="binding site" evidence="1">
    <location>
        <position position="91"/>
    </location>
    <ligand>
        <name>Fe cation</name>
        <dbReference type="ChEBI" id="CHEBI:24875"/>
    </ligand>
</feature>
<feature type="binding site" evidence="1">
    <location>
        <position position="133"/>
    </location>
    <ligand>
        <name>Fe cation</name>
        <dbReference type="ChEBI" id="CHEBI:24875"/>
    </ligand>
</feature>
<feature type="binding site" evidence="1">
    <location>
        <position position="137"/>
    </location>
    <ligand>
        <name>Fe cation</name>
        <dbReference type="ChEBI" id="CHEBI:24875"/>
    </ligand>
</feature>
<proteinExistence type="inferred from homology"/>
<organism>
    <name type="scientific">Escherichia coli (strain K12 / MC4100 / BW2952)</name>
    <dbReference type="NCBI Taxonomy" id="595496"/>
    <lineage>
        <taxon>Bacteria</taxon>
        <taxon>Pseudomonadati</taxon>
        <taxon>Pseudomonadota</taxon>
        <taxon>Gammaproteobacteria</taxon>
        <taxon>Enterobacterales</taxon>
        <taxon>Enterobacteriaceae</taxon>
        <taxon>Escherichia</taxon>
    </lineage>
</organism>
<name>DEF_ECOBW</name>
<sequence length="169" mass="19328">MSVLQVLHIPDERLRKVAKPVEEVNAEIQRIVDDMFETMYAEEGIGLAATQVDIHQRIIVIDVSENRDERLVLINPELLEKSGETGIEEGCLSIPEQRALVPRAEKVKIRALDRDGKPFELEADGLLAICIQHEMDHLVGKLFMDYLSPLKQQRIRQKVEKLDRLKARA</sequence>
<evidence type="ECO:0000255" key="1">
    <source>
        <dbReference type="HAMAP-Rule" id="MF_00163"/>
    </source>
</evidence>
<comment type="function">
    <text evidence="1">Removes the formyl group from the N-terminal Met of newly synthesized proteins. Requires at least a dipeptide for an efficient rate of reaction. N-terminal L-methionine is a prerequisite for activity but the enzyme has broad specificity at other positions.</text>
</comment>
<comment type="catalytic activity">
    <reaction evidence="1">
        <text>N-terminal N-formyl-L-methionyl-[peptide] + H2O = N-terminal L-methionyl-[peptide] + formate</text>
        <dbReference type="Rhea" id="RHEA:24420"/>
        <dbReference type="Rhea" id="RHEA-COMP:10639"/>
        <dbReference type="Rhea" id="RHEA-COMP:10640"/>
        <dbReference type="ChEBI" id="CHEBI:15377"/>
        <dbReference type="ChEBI" id="CHEBI:15740"/>
        <dbReference type="ChEBI" id="CHEBI:49298"/>
        <dbReference type="ChEBI" id="CHEBI:64731"/>
        <dbReference type="EC" id="3.5.1.88"/>
    </reaction>
</comment>
<comment type="cofactor">
    <cofactor evidence="1">
        <name>Fe(2+)</name>
        <dbReference type="ChEBI" id="CHEBI:29033"/>
    </cofactor>
    <text evidence="1">Binds 1 Fe(2+) ion.</text>
</comment>
<comment type="similarity">
    <text evidence="1">Belongs to the polypeptide deformylase family.</text>
</comment>
<accession>C4ZUE1</accession>
<keyword id="KW-0378">Hydrolase</keyword>
<keyword id="KW-0408">Iron</keyword>
<keyword id="KW-0479">Metal-binding</keyword>
<keyword id="KW-0648">Protein biosynthesis</keyword>
<reference key="1">
    <citation type="journal article" date="2009" name="J. Bacteriol.">
        <title>Genomic sequencing reveals regulatory mutations and recombinational events in the widely used MC4100 lineage of Escherichia coli K-12.</title>
        <authorList>
            <person name="Ferenci T."/>
            <person name="Zhou Z."/>
            <person name="Betteridge T."/>
            <person name="Ren Y."/>
            <person name="Liu Y."/>
            <person name="Feng L."/>
            <person name="Reeves P.R."/>
            <person name="Wang L."/>
        </authorList>
    </citation>
    <scope>NUCLEOTIDE SEQUENCE [LARGE SCALE GENOMIC DNA]</scope>
    <source>
        <strain>K12 / MC4100 / BW2952</strain>
    </source>
</reference>